<sequence length="137" mass="15996">MKRLLTLAWFLACSVPAVPGGLLELKSMIEKVTGKNAVKNYGFYGCYCGWGGHGTPKDGTDWCCRMHDRCYGLLEEKHCAIRTQSYDYRFTQDLVICEHDSFCPVRLCACDRKLVYCLRRNLWSYNRLYQYYPNFLC</sequence>
<proteinExistence type="evidence at transcript level"/>
<evidence type="ECO:0000250" key="1"/>
<evidence type="ECO:0000250" key="2">
    <source>
        <dbReference type="UniProtKB" id="P39877"/>
    </source>
</evidence>
<evidence type="ECO:0000250" key="3">
    <source>
        <dbReference type="UniProtKB" id="P97391"/>
    </source>
</evidence>
<evidence type="ECO:0000255" key="4"/>
<evidence type="ECO:0000255" key="5">
    <source>
        <dbReference type="PROSITE-ProRule" id="PRU10035"/>
    </source>
</evidence>
<evidence type="ECO:0000255" key="6">
    <source>
        <dbReference type="PROSITE-ProRule" id="PRU10036"/>
    </source>
</evidence>
<evidence type="ECO:0000305" key="7"/>
<dbReference type="EC" id="3.1.1.4" evidence="2 3"/>
<dbReference type="EMBL" id="U03763">
    <property type="protein sequence ID" value="AAA82112.1"/>
    <property type="molecule type" value="mRNA"/>
</dbReference>
<dbReference type="EMBL" id="AY651028">
    <property type="protein sequence ID" value="AAT68714.1"/>
    <property type="molecule type" value="mRNA"/>
</dbReference>
<dbReference type="EMBL" id="BC085745">
    <property type="protein sequence ID" value="AAH85745.1"/>
    <property type="molecule type" value="mRNA"/>
</dbReference>
<dbReference type="RefSeq" id="NP_001416523.1">
    <property type="nucleotide sequence ID" value="NM_001429594.1"/>
</dbReference>
<dbReference type="RefSeq" id="NP_001416524.1">
    <property type="nucleotide sequence ID" value="NM_001429595.1"/>
</dbReference>
<dbReference type="RefSeq" id="NP_001416525.1">
    <property type="nucleotide sequence ID" value="NM_001429596.1"/>
</dbReference>
<dbReference type="RefSeq" id="NP_001416526.1">
    <property type="nucleotide sequence ID" value="NM_001429597.1"/>
</dbReference>
<dbReference type="RefSeq" id="NP_058870.1">
    <property type="nucleotide sequence ID" value="NM_017174.3"/>
</dbReference>
<dbReference type="RefSeq" id="XP_006239201.1">
    <property type="nucleotide sequence ID" value="XM_006239139.3"/>
</dbReference>
<dbReference type="RefSeq" id="XP_008762432.1">
    <property type="nucleotide sequence ID" value="XM_008764210.2"/>
</dbReference>
<dbReference type="RefSeq" id="XP_063143324.1">
    <property type="nucleotide sequence ID" value="XM_063287254.1"/>
</dbReference>
<dbReference type="SMR" id="P51433"/>
<dbReference type="FunCoup" id="P51433">
    <property type="interactions" value="231"/>
</dbReference>
<dbReference type="STRING" id="10116.ENSRNOP00000022715"/>
<dbReference type="PaxDb" id="10116-ENSRNOP00000022715"/>
<dbReference type="Ensembl" id="ENSRNOT00000022716.6">
    <property type="protein sequence ID" value="ENSRNOP00000022715.4"/>
    <property type="gene ID" value="ENSRNOG00000016838.6"/>
</dbReference>
<dbReference type="GeneID" id="29354"/>
<dbReference type="KEGG" id="rno:29354"/>
<dbReference type="UCSC" id="RGD:62051">
    <property type="organism name" value="rat"/>
</dbReference>
<dbReference type="AGR" id="RGD:62051"/>
<dbReference type="CTD" id="5322"/>
<dbReference type="RGD" id="62051">
    <property type="gene designation" value="Pla2g5"/>
</dbReference>
<dbReference type="eggNOG" id="KOG4087">
    <property type="taxonomic scope" value="Eukaryota"/>
</dbReference>
<dbReference type="GeneTree" id="ENSGT00940000162222"/>
<dbReference type="HOGENOM" id="CLU_090683_3_0_1"/>
<dbReference type="InParanoid" id="P51433"/>
<dbReference type="OrthoDB" id="5841574at2759"/>
<dbReference type="PhylomeDB" id="P51433"/>
<dbReference type="TreeFam" id="TF319283"/>
<dbReference type="Reactome" id="R-RNO-1482788">
    <property type="pathway name" value="Acyl chain remodelling of PC"/>
</dbReference>
<dbReference type="Reactome" id="R-RNO-1482801">
    <property type="pathway name" value="Acyl chain remodelling of PS"/>
</dbReference>
<dbReference type="Reactome" id="R-RNO-1482839">
    <property type="pathway name" value="Acyl chain remodelling of PE"/>
</dbReference>
<dbReference type="Reactome" id="R-RNO-1482922">
    <property type="pathway name" value="Acyl chain remodelling of PI"/>
</dbReference>
<dbReference type="Reactome" id="R-RNO-1482925">
    <property type="pathway name" value="Acyl chain remodelling of PG"/>
</dbReference>
<dbReference type="Reactome" id="R-RNO-1483166">
    <property type="pathway name" value="Synthesis of PA"/>
</dbReference>
<dbReference type="UniPathway" id="UPA00085"/>
<dbReference type="UniPathway" id="UPA00878"/>
<dbReference type="UniPathway" id="UPA00879"/>
<dbReference type="PRO" id="PR:P51433"/>
<dbReference type="Proteomes" id="UP000002494">
    <property type="component" value="Chromosome 5"/>
</dbReference>
<dbReference type="Bgee" id="ENSRNOG00000016838">
    <property type="expression patterns" value="Expressed in heart and 16 other cell types or tissues"/>
</dbReference>
<dbReference type="GO" id="GO:0009986">
    <property type="term" value="C:cell surface"/>
    <property type="evidence" value="ECO:0000266"/>
    <property type="project" value="RGD"/>
</dbReference>
<dbReference type="GO" id="GO:0032009">
    <property type="term" value="C:early phagosome"/>
    <property type="evidence" value="ECO:0000250"/>
    <property type="project" value="UniProtKB"/>
</dbReference>
<dbReference type="GO" id="GO:0005576">
    <property type="term" value="C:extracellular region"/>
    <property type="evidence" value="ECO:0007669"/>
    <property type="project" value="UniProtKB-SubCell"/>
</dbReference>
<dbReference type="GO" id="GO:0005794">
    <property type="term" value="C:Golgi apparatus"/>
    <property type="evidence" value="ECO:0007669"/>
    <property type="project" value="UniProtKB-SubCell"/>
</dbReference>
<dbReference type="GO" id="GO:0048471">
    <property type="term" value="C:perinuclear region of cytoplasm"/>
    <property type="evidence" value="ECO:0000314"/>
    <property type="project" value="RGD"/>
</dbReference>
<dbReference type="GO" id="GO:0032010">
    <property type="term" value="C:phagolysosome"/>
    <property type="evidence" value="ECO:0000250"/>
    <property type="project" value="UniProtKB"/>
</dbReference>
<dbReference type="GO" id="GO:0005886">
    <property type="term" value="C:plasma membrane"/>
    <property type="evidence" value="ECO:0007669"/>
    <property type="project" value="UniProtKB-SubCell"/>
</dbReference>
<dbReference type="GO" id="GO:0055037">
    <property type="term" value="C:recycling endosome"/>
    <property type="evidence" value="ECO:0007669"/>
    <property type="project" value="UniProtKB-SubCell"/>
</dbReference>
<dbReference type="GO" id="GO:0005509">
    <property type="term" value="F:calcium ion binding"/>
    <property type="evidence" value="ECO:0000318"/>
    <property type="project" value="GO_Central"/>
</dbReference>
<dbReference type="GO" id="GO:0047498">
    <property type="term" value="F:calcium-dependent phospholipase A2 activity"/>
    <property type="evidence" value="ECO:0000314"/>
    <property type="project" value="RGD"/>
</dbReference>
<dbReference type="GO" id="GO:0047499">
    <property type="term" value="F:calcium-independent phospholipase A2 activity"/>
    <property type="evidence" value="ECO:0000266"/>
    <property type="project" value="RGD"/>
</dbReference>
<dbReference type="GO" id="GO:0008201">
    <property type="term" value="F:heparin binding"/>
    <property type="evidence" value="ECO:0000314"/>
    <property type="project" value="RGD"/>
</dbReference>
<dbReference type="GO" id="GO:0004623">
    <property type="term" value="F:phospholipase A2 activity"/>
    <property type="evidence" value="ECO:0000266"/>
    <property type="project" value="RGD"/>
</dbReference>
<dbReference type="GO" id="GO:0005543">
    <property type="term" value="F:phospholipid binding"/>
    <property type="evidence" value="ECO:0000318"/>
    <property type="project" value="GO_Central"/>
</dbReference>
<dbReference type="GO" id="GO:0005102">
    <property type="term" value="F:signaling receptor binding"/>
    <property type="evidence" value="ECO:0000266"/>
    <property type="project" value="RGD"/>
</dbReference>
<dbReference type="GO" id="GO:0050482">
    <property type="term" value="P:arachidonate secretion"/>
    <property type="evidence" value="ECO:0000314"/>
    <property type="project" value="RGD"/>
</dbReference>
<dbReference type="GO" id="GO:0006631">
    <property type="term" value="P:fatty acid metabolic process"/>
    <property type="evidence" value="ECO:0007669"/>
    <property type="project" value="UniProtKB-KW"/>
</dbReference>
<dbReference type="GO" id="GO:0019370">
    <property type="term" value="P:leukotriene biosynthetic process"/>
    <property type="evidence" value="ECO:0000314"/>
    <property type="project" value="RGD"/>
</dbReference>
<dbReference type="GO" id="GO:0034374">
    <property type="term" value="P:low-density lipoprotein particle remodeling"/>
    <property type="evidence" value="ECO:0000250"/>
    <property type="project" value="UniProtKB"/>
</dbReference>
<dbReference type="GO" id="GO:0050728">
    <property type="term" value="P:negative regulation of inflammatory response"/>
    <property type="evidence" value="ECO:0000266"/>
    <property type="project" value="RGD"/>
</dbReference>
<dbReference type="GO" id="GO:0042130">
    <property type="term" value="P:negative regulation of T cell proliferation"/>
    <property type="evidence" value="ECO:0000318"/>
    <property type="project" value="GO_Central"/>
</dbReference>
<dbReference type="GO" id="GO:0090385">
    <property type="term" value="P:phagosome-lysosome fusion"/>
    <property type="evidence" value="ECO:0000250"/>
    <property type="project" value="UniProtKB"/>
</dbReference>
<dbReference type="GO" id="GO:0034638">
    <property type="term" value="P:phosphatidylcholine catabolic process"/>
    <property type="evidence" value="ECO:0000250"/>
    <property type="project" value="UniProtKB"/>
</dbReference>
<dbReference type="GO" id="GO:0046470">
    <property type="term" value="P:phosphatidylcholine metabolic process"/>
    <property type="evidence" value="ECO:0000318"/>
    <property type="project" value="GO_Central"/>
</dbReference>
<dbReference type="GO" id="GO:0046471">
    <property type="term" value="P:phosphatidylglycerol metabolic process"/>
    <property type="evidence" value="ECO:0000318"/>
    <property type="project" value="GO_Central"/>
</dbReference>
<dbReference type="GO" id="GO:0006644">
    <property type="term" value="P:phospholipid metabolic process"/>
    <property type="evidence" value="ECO:0000266"/>
    <property type="project" value="RGD"/>
</dbReference>
<dbReference type="GO" id="GO:0006663">
    <property type="term" value="P:platelet activating factor biosynthetic process"/>
    <property type="evidence" value="ECO:0000314"/>
    <property type="project" value="RGD"/>
</dbReference>
<dbReference type="GO" id="GO:1905036">
    <property type="term" value="P:positive regulation of antifungal innate immune response"/>
    <property type="evidence" value="ECO:0000250"/>
    <property type="project" value="UniProtKB"/>
</dbReference>
<dbReference type="GO" id="GO:0070374">
    <property type="term" value="P:positive regulation of ERK1 and ERK2 cascade"/>
    <property type="evidence" value="ECO:0000266"/>
    <property type="project" value="RGD"/>
</dbReference>
<dbReference type="GO" id="GO:0090265">
    <property type="term" value="P:positive regulation of immune complex clearance by monocytes and macrophages"/>
    <property type="evidence" value="ECO:0000250"/>
    <property type="project" value="UniProtKB"/>
</dbReference>
<dbReference type="GO" id="GO:0010744">
    <property type="term" value="P:positive regulation of macrophage derived foam cell differentiation"/>
    <property type="evidence" value="ECO:0000250"/>
    <property type="project" value="UniProtKB"/>
</dbReference>
<dbReference type="GO" id="GO:1903028">
    <property type="term" value="P:positive regulation of opsonization"/>
    <property type="evidence" value="ECO:0000250"/>
    <property type="project" value="UniProtKB"/>
</dbReference>
<dbReference type="GO" id="GO:0050766">
    <property type="term" value="P:positive regulation of phagocytosis"/>
    <property type="evidence" value="ECO:0000250"/>
    <property type="project" value="UniProtKB"/>
</dbReference>
<dbReference type="GO" id="GO:1905164">
    <property type="term" value="P:positive regulation of phagosome maturation"/>
    <property type="evidence" value="ECO:0000250"/>
    <property type="project" value="UniProtKB"/>
</dbReference>
<dbReference type="GO" id="GO:0043030">
    <property type="term" value="P:regulation of macrophage activation"/>
    <property type="evidence" value="ECO:0000266"/>
    <property type="project" value="RGD"/>
</dbReference>
<dbReference type="GO" id="GO:0051591">
    <property type="term" value="P:response to cAMP"/>
    <property type="evidence" value="ECO:0000270"/>
    <property type="project" value="RGD"/>
</dbReference>
<dbReference type="GO" id="GO:0034097">
    <property type="term" value="P:response to cytokine"/>
    <property type="evidence" value="ECO:0000270"/>
    <property type="project" value="RGD"/>
</dbReference>
<dbReference type="CDD" id="cd00125">
    <property type="entry name" value="PLA2c"/>
    <property type="match status" value="1"/>
</dbReference>
<dbReference type="FunFam" id="1.20.90.10:FF:000001">
    <property type="entry name" value="Basic phospholipase A2 homolog"/>
    <property type="match status" value="1"/>
</dbReference>
<dbReference type="Gene3D" id="1.20.90.10">
    <property type="entry name" value="Phospholipase A2 domain"/>
    <property type="match status" value="1"/>
</dbReference>
<dbReference type="InterPro" id="IPR001211">
    <property type="entry name" value="PLipase_A2"/>
</dbReference>
<dbReference type="InterPro" id="IPR033112">
    <property type="entry name" value="PLipase_A2_Asp_AS"/>
</dbReference>
<dbReference type="InterPro" id="IPR016090">
    <property type="entry name" value="PLipase_A2_dom"/>
</dbReference>
<dbReference type="InterPro" id="IPR036444">
    <property type="entry name" value="PLipase_A2_dom_sf"/>
</dbReference>
<dbReference type="InterPro" id="IPR033113">
    <property type="entry name" value="PLipase_A2_His_AS"/>
</dbReference>
<dbReference type="PANTHER" id="PTHR11716">
    <property type="entry name" value="PHOSPHOLIPASE A2 FAMILY MEMBER"/>
    <property type="match status" value="1"/>
</dbReference>
<dbReference type="PANTHER" id="PTHR11716:SF10">
    <property type="entry name" value="PHOSPHOLIPASE A2 GROUP V"/>
    <property type="match status" value="1"/>
</dbReference>
<dbReference type="Pfam" id="PF00068">
    <property type="entry name" value="Phospholip_A2_1"/>
    <property type="match status" value="1"/>
</dbReference>
<dbReference type="PRINTS" id="PR00389">
    <property type="entry name" value="PHPHLIPASEA2"/>
</dbReference>
<dbReference type="SMART" id="SM00085">
    <property type="entry name" value="PA2c"/>
    <property type="match status" value="1"/>
</dbReference>
<dbReference type="SUPFAM" id="SSF48619">
    <property type="entry name" value="Phospholipase A2, PLA2"/>
    <property type="match status" value="1"/>
</dbReference>
<dbReference type="PROSITE" id="PS00119">
    <property type="entry name" value="PA2_ASP"/>
    <property type="match status" value="1"/>
</dbReference>
<dbReference type="PROSITE" id="PS00118">
    <property type="entry name" value="PA2_HIS"/>
    <property type="match status" value="1"/>
</dbReference>
<name>PA2G5_RAT</name>
<feature type="signal peptide" evidence="4">
    <location>
        <begin position="1"/>
        <end position="20"/>
    </location>
</feature>
<feature type="chain" id="PRO_0000022763" description="Phospholipase A2 group V">
    <location>
        <begin position="21"/>
        <end position="137"/>
    </location>
</feature>
<feature type="active site" evidence="1">
    <location>
        <position position="67"/>
    </location>
</feature>
<feature type="active site" evidence="1">
    <location>
        <position position="111"/>
    </location>
</feature>
<feature type="binding site" evidence="1">
    <location>
        <position position="47"/>
    </location>
    <ligand>
        <name>Ca(2+)</name>
        <dbReference type="ChEBI" id="CHEBI:29108"/>
    </ligand>
</feature>
<feature type="binding site" evidence="1">
    <location>
        <position position="49"/>
    </location>
    <ligand>
        <name>Ca(2+)</name>
        <dbReference type="ChEBI" id="CHEBI:29108"/>
    </ligand>
</feature>
<feature type="binding site" evidence="1">
    <location>
        <position position="51"/>
    </location>
    <ligand>
        <name>Ca(2+)</name>
        <dbReference type="ChEBI" id="CHEBI:29108"/>
    </ligand>
</feature>
<feature type="binding site" evidence="1">
    <location>
        <position position="68"/>
    </location>
    <ligand>
        <name>Ca(2+)</name>
        <dbReference type="ChEBI" id="CHEBI:29108"/>
    </ligand>
</feature>
<feature type="disulfide bond" evidence="1">
    <location>
        <begin position="46"/>
        <end position="137"/>
    </location>
</feature>
<feature type="disulfide bond" evidence="1">
    <location>
        <begin position="48"/>
        <end position="64"/>
    </location>
</feature>
<feature type="disulfide bond" evidence="1">
    <location>
        <begin position="63"/>
        <end position="117"/>
    </location>
</feature>
<feature type="disulfide bond" evidence="1">
    <location>
        <begin position="70"/>
        <end position="110"/>
    </location>
</feature>
<feature type="disulfide bond" evidence="1">
    <location>
        <begin position="79"/>
        <end position="103"/>
    </location>
</feature>
<feature type="disulfide bond" evidence="1">
    <location>
        <begin position="97"/>
        <end position="108"/>
    </location>
</feature>
<protein>
    <recommendedName>
        <fullName>Phospholipase A2 group V</fullName>
        <ecNumber evidence="2 3">3.1.1.4</ecNumber>
    </recommendedName>
    <alternativeName>
        <fullName>PLA2-10</fullName>
    </alternativeName>
    <alternativeName>
        <fullName>Phosphatidylcholine 2-acylhydrolase 5</fullName>
    </alternativeName>
</protein>
<accession>P51433</accession>
<accession>Q6DQ96</accession>
<gene>
    <name type="primary">Pla2g5</name>
</gene>
<reference key="1">
    <citation type="journal article" date="1994" name="Biochim. Biophys. Acta">
        <title>Cloning, expression and partial characterization of a novel rat phospholipase A2.</title>
        <authorList>
            <person name="Chen J."/>
            <person name="Engle S.J."/>
            <person name="Seilhamer J.J."/>
            <person name="Tischfield J.A."/>
        </authorList>
    </citation>
    <scope>NUCLEOTIDE SEQUENCE [MRNA]</scope>
</reference>
<reference key="2">
    <citation type="submission" date="2004-06" db="EMBL/GenBank/DDBJ databases">
        <title>Cloning and sequence determination of rat group V phospholipase A2 from ovary.</title>
        <authorList>
            <person name="Liang N.S."/>
            <person name="Su Q.B."/>
            <person name="Li Y."/>
            <person name="Yang F."/>
            <person name="Lu Y."/>
            <person name="Xie Y.A."/>
        </authorList>
    </citation>
    <scope>NUCLEOTIDE SEQUENCE [MRNA]</scope>
    <source>
        <strain>Wistar</strain>
        <tissue>Ovary</tissue>
    </source>
</reference>
<reference key="3">
    <citation type="journal article" date="2004" name="Genome Res.">
        <title>The status, quality, and expansion of the NIH full-length cDNA project: the Mammalian Gene Collection (MGC).</title>
        <authorList>
            <consortium name="The MGC Project Team"/>
        </authorList>
    </citation>
    <scope>NUCLEOTIDE SEQUENCE [LARGE SCALE MRNA]</scope>
    <source>
        <tissue>Heart</tissue>
    </source>
</reference>
<comment type="function">
    <text evidence="2 3">Secretory calcium-dependent phospholipase A2 that primarily targets extracellular phospholipids. Hydrolyzes the ester bond of the fatty acyl group attached at sn-2 position of phospholipids (phospholipase A2 activity), preferentially releasing fatty acyl groups with a low degree of unsaturation such as oleoyl (C18:1) and linoleoyl (C18:2) groups (By similarity). Hydrolyzes low-density lipoprotein (LDL) phospholipids releasing unsaturated fatty acids that drive macrophage polarization toward an M2 phenotype (By similarity). May act in an autocrine and paracrine manner. Contributes to lipid remodeling of cellular membranes at different subcellular locations and generation of lipid mediators involved in pathogen clearance. Cleaves sn-2 fatty acyl chains of cardiolipin, a major component of the inner membrane of mitochondria and bacterial membranes. Promotes phagocytosis of bacteria in macrophages through production of lysophosphatidylethanolamines. Displays bactericidal activity against Gram-positive bacteria by directly hydrolyzing phospholipids of the bacterial membrane (By similarity). Promotes phagocytosis and killing of ingested fungi likely through controlling phagosome-lysosome fusion and phagosome maturation (By similarity). Plays a role in biosynthesis of cysteinyl leukotrienes (CysLTs) in myeloid cells. In eosinophils, triggers perinuclear arachidonate release and LTC4 synthesis in a PLA2G4A-independent way. In neutrophils, amplifies CysLTs biosynthesis initiated by PLA2G4A (By similarity). Promotes immune complex clearance in macrophages via stimulating synthesis of CysLTs, which act through CYSLTR1 to trigger phagocytosis. May regulate antigen processing in antigen-presenting cells. In pulmonary macrophages regulates IL33 production required for activation of group 2 innate lymphoid cells (By similarity). May play a role in the biosynthesis of N-acyl ethanolamines that regulate energy metabolism. Hydrolyzes N-acyl phosphatidylethanolamines to N-acyl lysophosphatidylethanolamines, which are further cleaved by a lysophospholipase D to release N-acyl ethanolamines (By similarity).</text>
</comment>
<comment type="catalytic activity">
    <reaction evidence="5 6">
        <text>a 1,2-diacyl-sn-glycero-3-phosphocholine + H2O = a 1-acyl-sn-glycero-3-phosphocholine + a fatty acid + H(+)</text>
        <dbReference type="Rhea" id="RHEA:15801"/>
        <dbReference type="ChEBI" id="CHEBI:15377"/>
        <dbReference type="ChEBI" id="CHEBI:15378"/>
        <dbReference type="ChEBI" id="CHEBI:28868"/>
        <dbReference type="ChEBI" id="CHEBI:57643"/>
        <dbReference type="ChEBI" id="CHEBI:58168"/>
        <dbReference type="EC" id="3.1.1.4"/>
    </reaction>
    <physiologicalReaction direction="left-to-right" evidence="2">
        <dbReference type="Rhea" id="RHEA:15802"/>
    </physiologicalReaction>
</comment>
<comment type="catalytic activity">
    <reaction evidence="2">
        <text>1-hexadecanoyl-2-(9Z-octadecenoyl)-sn-glycero-3-phosphocholine + H2O = 1-hexadecanoyl-sn-glycero-3-phosphocholine + (9Z)-octadecenoate + H(+)</text>
        <dbReference type="Rhea" id="RHEA:38779"/>
        <dbReference type="ChEBI" id="CHEBI:15377"/>
        <dbReference type="ChEBI" id="CHEBI:15378"/>
        <dbReference type="ChEBI" id="CHEBI:30823"/>
        <dbReference type="ChEBI" id="CHEBI:72998"/>
        <dbReference type="ChEBI" id="CHEBI:73001"/>
    </reaction>
    <physiologicalReaction direction="left-to-right" evidence="2">
        <dbReference type="Rhea" id="RHEA:38780"/>
    </physiologicalReaction>
</comment>
<comment type="catalytic activity">
    <reaction evidence="2">
        <text>1-hexadecanoyl-2-(5Z,8Z,11Z,14Z-eicosatetraenoyl)-sn-glycero-3-phosphocholine + H2O = 1-hexadecanoyl-sn-glycero-3-phosphocholine + (5Z,8Z,11Z,14Z)-eicosatetraenoate + H(+)</text>
        <dbReference type="Rhea" id="RHEA:40427"/>
        <dbReference type="ChEBI" id="CHEBI:15377"/>
        <dbReference type="ChEBI" id="CHEBI:15378"/>
        <dbReference type="ChEBI" id="CHEBI:32395"/>
        <dbReference type="ChEBI" id="CHEBI:72998"/>
        <dbReference type="ChEBI" id="CHEBI:73003"/>
    </reaction>
    <physiologicalReaction direction="left-to-right" evidence="2">
        <dbReference type="Rhea" id="RHEA:40428"/>
    </physiologicalReaction>
</comment>
<comment type="catalytic activity">
    <reaction evidence="2">
        <text>1-hexadecanoyl-2-(9Z,12Z-octadecadienoyl)-sn-glycero-3-phosphoethanolamine + H2O = 1-hexadecanoyl-sn-glycero-3-phosphoethanolamine + (9Z,12Z)-octadecadienoate + H(+)</text>
        <dbReference type="Rhea" id="RHEA:40815"/>
        <dbReference type="ChEBI" id="CHEBI:15377"/>
        <dbReference type="ChEBI" id="CHEBI:15378"/>
        <dbReference type="ChEBI" id="CHEBI:30245"/>
        <dbReference type="ChEBI" id="CHEBI:73004"/>
        <dbReference type="ChEBI" id="CHEBI:73008"/>
    </reaction>
    <physiologicalReaction direction="left-to-right" evidence="2">
        <dbReference type="Rhea" id="RHEA:40816"/>
    </physiologicalReaction>
</comment>
<comment type="catalytic activity">
    <reaction evidence="2">
        <text>1-hexadecanoyl-2-(5Z,8Z,11Z,14Z-eicosatetraenoyl)-sn-glycero-3-phosphoethanolamine + H2O = 1-hexadecanoyl-sn-glycero-3-phosphoethanolamine + (5Z,8Z,11Z,14Z)-eicosatetraenoate + H(+)</text>
        <dbReference type="Rhea" id="RHEA:40431"/>
        <dbReference type="ChEBI" id="CHEBI:15377"/>
        <dbReference type="ChEBI" id="CHEBI:15378"/>
        <dbReference type="ChEBI" id="CHEBI:32395"/>
        <dbReference type="ChEBI" id="CHEBI:73004"/>
        <dbReference type="ChEBI" id="CHEBI:73009"/>
    </reaction>
    <physiologicalReaction direction="left-to-right" evidence="2">
        <dbReference type="Rhea" id="RHEA:40432"/>
    </physiologicalReaction>
</comment>
<comment type="catalytic activity">
    <reaction evidence="2">
        <text>1-octadecanoyl-2-(5Z,8Z,11Z,14Z-eicosatetraenoyl)-sn-glycero-3-phospho-(1D-myo-inositol) + H2O = 1-octadecanoyl-sn-glycero-3-phospho-(1D-myo-inositol) + (5Z,8Z,11Z,14Z)-eicosatetraenoate + H(+)</text>
        <dbReference type="Rhea" id="RHEA:41215"/>
        <dbReference type="ChEBI" id="CHEBI:15377"/>
        <dbReference type="ChEBI" id="CHEBI:15378"/>
        <dbReference type="ChEBI" id="CHEBI:32395"/>
        <dbReference type="ChEBI" id="CHEBI:74243"/>
        <dbReference type="ChEBI" id="CHEBI:133606"/>
    </reaction>
    <physiologicalReaction direction="left-to-right" evidence="2">
        <dbReference type="Rhea" id="RHEA:41216"/>
    </physiologicalReaction>
</comment>
<comment type="catalytic activity">
    <reaction evidence="3">
        <text>1-hexadecanoyl-2-(9Z-octadecenoyl)-sn-glycero-3-phosphoglycerol + H2O = 1-hexadecanoyl-sn-glycero-3-phosphoglycerol + (9Z)-octadecenoate + H(+)</text>
        <dbReference type="Rhea" id="RHEA:44524"/>
        <dbReference type="ChEBI" id="CHEBI:15377"/>
        <dbReference type="ChEBI" id="CHEBI:15378"/>
        <dbReference type="ChEBI" id="CHEBI:30823"/>
        <dbReference type="ChEBI" id="CHEBI:84472"/>
        <dbReference type="ChEBI" id="CHEBI:84475"/>
    </reaction>
    <physiologicalReaction direction="left-to-right" evidence="3">
        <dbReference type="Rhea" id="RHEA:44525"/>
    </physiologicalReaction>
</comment>
<comment type="catalytic activity">
    <reaction evidence="2">
        <text>N-hexadecanoyl-1,2-di-(9Z-octadecenoyl)-sn-glycero-3-phosphoethanolamine + H2O = N-hexadecanoyl-1-(9Z-octadecenoyl)-sn-glycero-3-phosphoethanolamine + (9Z)-octadecenoate + H(+)</text>
        <dbReference type="Rhea" id="RHEA:45424"/>
        <dbReference type="ChEBI" id="CHEBI:15377"/>
        <dbReference type="ChEBI" id="CHEBI:15378"/>
        <dbReference type="ChEBI" id="CHEBI:30823"/>
        <dbReference type="ChEBI" id="CHEBI:78097"/>
        <dbReference type="ChEBI" id="CHEBI:85217"/>
    </reaction>
    <physiologicalReaction direction="left-to-right" evidence="2">
        <dbReference type="Rhea" id="RHEA:45425"/>
    </physiologicalReaction>
</comment>
<comment type="catalytic activity">
    <reaction evidence="2">
        <text>1'-[1,2-di-(9Z-octadecenoyl)-sn-glycero-3-phospho]-3'-[1-(9Z-octadecenoyl)-sn-glycero-3-phospho]-glycerol + H2O = 1',3'-bis-[1-(9Z-octadecenoyl)-sn-glycero-3-phospho]-glycerol + (9Z)-octadecenoate + H(+)</text>
        <dbReference type="Rhea" id="RHEA:40467"/>
        <dbReference type="ChEBI" id="CHEBI:15377"/>
        <dbReference type="ChEBI" id="CHEBI:15378"/>
        <dbReference type="ChEBI" id="CHEBI:30823"/>
        <dbReference type="ChEBI" id="CHEBI:77256"/>
        <dbReference type="ChEBI" id="CHEBI:77259"/>
    </reaction>
    <physiologicalReaction direction="left-to-right" evidence="2">
        <dbReference type="Rhea" id="RHEA:40468"/>
    </physiologicalReaction>
</comment>
<comment type="catalytic activity">
    <reaction evidence="2">
        <text>1',3'-bis[1,2-di-(9Z-octadecenoyl)-sn-glycero-3-phospho]-glycerol + H2O = 1'-[1,2-di-(9Z-octadecenoyl)-sn-glycero-3-phospho]-3'-[1-(9Z-octadecenoyl)-sn-glycero-3-phospho]-glycerol + (9Z)-octadecenoate + H(+)</text>
        <dbReference type="Rhea" id="RHEA:40463"/>
        <dbReference type="ChEBI" id="CHEBI:15377"/>
        <dbReference type="ChEBI" id="CHEBI:15378"/>
        <dbReference type="ChEBI" id="CHEBI:30823"/>
        <dbReference type="ChEBI" id="CHEBI:77253"/>
        <dbReference type="ChEBI" id="CHEBI:77259"/>
    </reaction>
    <physiologicalReaction direction="left-to-right" evidence="2">
        <dbReference type="Rhea" id="RHEA:40464"/>
    </physiologicalReaction>
</comment>
<comment type="cofactor">
    <cofactor evidence="1">
        <name>Ca(2+)</name>
        <dbReference type="ChEBI" id="CHEBI:29108"/>
    </cofactor>
    <text evidence="1">Binds 1 Ca(2+) ion per subunit.</text>
</comment>
<comment type="pathway">
    <text evidence="2">Lipid metabolism; phospholipid metabolism.</text>
</comment>
<comment type="pathway">
    <text evidence="2">Lipid metabolism; leukotriene B4 biosynthesis.</text>
</comment>
<comment type="pathway">
    <text evidence="2">Lipid metabolism; leukotriene C4 biosynthesis.</text>
</comment>
<comment type="subcellular location">
    <subcellularLocation>
        <location evidence="3">Secreted</location>
    </subcellularLocation>
    <subcellularLocation>
        <location evidence="3">Cell membrane</location>
    </subcellularLocation>
    <subcellularLocation>
        <location evidence="3">Cytoplasmic vesicle</location>
        <location evidence="3">Phagosome</location>
    </subcellularLocation>
    <subcellularLocation>
        <location evidence="3">Recycling endosome</location>
    </subcellularLocation>
    <subcellularLocation>
        <location evidence="3">Golgi apparatus</location>
        <location evidence="3">cis-Golgi network</location>
    </subcellularLocation>
    <subcellularLocation>
        <location evidence="3">Golgi apparatus</location>
        <location evidence="3">trans-Golgi network</location>
    </subcellularLocation>
</comment>
<comment type="PTM">
    <text>This enzyme lacks one of the seven disulfide bonds found in similar PA2 proteins.</text>
</comment>
<comment type="similarity">
    <text evidence="7">Belongs to the phospholipase A2 family.</text>
</comment>
<organism>
    <name type="scientific">Rattus norvegicus</name>
    <name type="common">Rat</name>
    <dbReference type="NCBI Taxonomy" id="10116"/>
    <lineage>
        <taxon>Eukaryota</taxon>
        <taxon>Metazoa</taxon>
        <taxon>Chordata</taxon>
        <taxon>Craniata</taxon>
        <taxon>Vertebrata</taxon>
        <taxon>Euteleostomi</taxon>
        <taxon>Mammalia</taxon>
        <taxon>Eutheria</taxon>
        <taxon>Euarchontoglires</taxon>
        <taxon>Glires</taxon>
        <taxon>Rodentia</taxon>
        <taxon>Myomorpha</taxon>
        <taxon>Muroidea</taxon>
        <taxon>Muridae</taxon>
        <taxon>Murinae</taxon>
        <taxon>Rattus</taxon>
    </lineage>
</organism>
<keyword id="KW-0106">Calcium</keyword>
<keyword id="KW-1003">Cell membrane</keyword>
<keyword id="KW-0968">Cytoplasmic vesicle</keyword>
<keyword id="KW-1015">Disulfide bond</keyword>
<keyword id="KW-0967">Endosome</keyword>
<keyword id="KW-0276">Fatty acid metabolism</keyword>
<keyword id="KW-0333">Golgi apparatus</keyword>
<keyword id="KW-0378">Hydrolase</keyword>
<keyword id="KW-0442">Lipid degradation</keyword>
<keyword id="KW-0443">Lipid metabolism</keyword>
<keyword id="KW-0472">Membrane</keyword>
<keyword id="KW-0479">Metal-binding</keyword>
<keyword id="KW-0581">Phagocytosis</keyword>
<keyword id="KW-0595">Phospholipid degradation</keyword>
<keyword id="KW-1208">Phospholipid metabolism</keyword>
<keyword id="KW-1185">Reference proteome</keyword>
<keyword id="KW-0964">Secreted</keyword>
<keyword id="KW-0732">Signal</keyword>